<dbReference type="EMBL" id="AE016828">
    <property type="protein sequence ID" value="AAO89714.2"/>
    <property type="status" value="ALT_INIT"/>
    <property type="molecule type" value="Genomic_DNA"/>
</dbReference>
<dbReference type="RefSeq" id="NP_819200.2">
    <property type="nucleotide sequence ID" value="NC_002971.3"/>
</dbReference>
<dbReference type="RefSeq" id="WP_010957406.1">
    <property type="nucleotide sequence ID" value="NC_002971.4"/>
</dbReference>
<dbReference type="SMR" id="Q83F03"/>
<dbReference type="STRING" id="227377.CBU_0150"/>
<dbReference type="EnsemblBacteria" id="AAO89714">
    <property type="protein sequence ID" value="AAO89714"/>
    <property type="gene ID" value="CBU_0150"/>
</dbReference>
<dbReference type="GeneID" id="1208021"/>
<dbReference type="KEGG" id="cbu:CBU_0150"/>
<dbReference type="PATRIC" id="fig|227377.7.peg.151"/>
<dbReference type="eggNOG" id="COG4582">
    <property type="taxonomic scope" value="Bacteria"/>
</dbReference>
<dbReference type="HOGENOM" id="CLU_076303_0_1_6"/>
<dbReference type="OrthoDB" id="5294622at2"/>
<dbReference type="Proteomes" id="UP000002671">
    <property type="component" value="Chromosome"/>
</dbReference>
<dbReference type="GO" id="GO:0032153">
    <property type="term" value="C:cell division site"/>
    <property type="evidence" value="ECO:0000318"/>
    <property type="project" value="GO_Central"/>
</dbReference>
<dbReference type="GO" id="GO:0005737">
    <property type="term" value="C:cytoplasm"/>
    <property type="evidence" value="ECO:0007669"/>
    <property type="project" value="UniProtKB-SubCell"/>
</dbReference>
<dbReference type="GO" id="GO:0000917">
    <property type="term" value="P:division septum assembly"/>
    <property type="evidence" value="ECO:0007669"/>
    <property type="project" value="UniProtKB-KW"/>
</dbReference>
<dbReference type="GO" id="GO:0043093">
    <property type="term" value="P:FtsZ-dependent cytokinesis"/>
    <property type="evidence" value="ECO:0000318"/>
    <property type="project" value="GO_Central"/>
</dbReference>
<dbReference type="Gene3D" id="1.10.3900.10">
    <property type="entry name" value="YacF-like"/>
    <property type="match status" value="1"/>
</dbReference>
<dbReference type="Gene3D" id="2.60.440.10">
    <property type="entry name" value="YacF-like domains"/>
    <property type="match status" value="1"/>
</dbReference>
<dbReference type="HAMAP" id="MF_01092">
    <property type="entry name" value="ZapD"/>
    <property type="match status" value="1"/>
</dbReference>
<dbReference type="InterPro" id="IPR009777">
    <property type="entry name" value="ZapD"/>
</dbReference>
<dbReference type="InterPro" id="IPR027462">
    <property type="entry name" value="ZapD_C"/>
</dbReference>
<dbReference type="InterPro" id="IPR036268">
    <property type="entry name" value="ZapD_sf"/>
</dbReference>
<dbReference type="NCBIfam" id="NF003656">
    <property type="entry name" value="PRK05287.1-4"/>
    <property type="match status" value="1"/>
</dbReference>
<dbReference type="PANTHER" id="PTHR39455">
    <property type="entry name" value="CELL DIVISION PROTEIN ZAPD"/>
    <property type="match status" value="1"/>
</dbReference>
<dbReference type="PANTHER" id="PTHR39455:SF1">
    <property type="entry name" value="CELL DIVISION PROTEIN ZAPD"/>
    <property type="match status" value="1"/>
</dbReference>
<dbReference type="Pfam" id="PF07072">
    <property type="entry name" value="ZapD"/>
    <property type="match status" value="1"/>
</dbReference>
<dbReference type="SUPFAM" id="SSF160950">
    <property type="entry name" value="YacF-like"/>
    <property type="match status" value="1"/>
</dbReference>
<feature type="chain" id="PRO_0000211666" description="Cell division protein ZapD">
    <location>
        <begin position="1"/>
        <end position="258"/>
    </location>
</feature>
<sequence>MVATTITYEQPLNEPMRICLRLEHLFRQLHEHIREPAPAASHLAMLALLKALNVIDRPDLKTKLTQTLTQQTSTLLQLKHSPEVDNHKLQGLLDTLDRYVTHLHQTTRKIGEPLRENAFLTQIRSHLYNPAGPCNFTTPAYALWLQQPSENRINDLQNWAKEFEPLINIVNAILQIIRESTSPQNIVARQGFYQQMLNATSPCQLIQLILPIEKNIYPEICAGKHRLVIRFLPLDVNNNENTKQIAEEISFKLNCCRI</sequence>
<proteinExistence type="inferred from homology"/>
<organism>
    <name type="scientific">Coxiella burnetii (strain RSA 493 / Nine Mile phase I)</name>
    <dbReference type="NCBI Taxonomy" id="227377"/>
    <lineage>
        <taxon>Bacteria</taxon>
        <taxon>Pseudomonadati</taxon>
        <taxon>Pseudomonadota</taxon>
        <taxon>Gammaproteobacteria</taxon>
        <taxon>Legionellales</taxon>
        <taxon>Coxiellaceae</taxon>
        <taxon>Coxiella</taxon>
    </lineage>
</organism>
<accession>Q83F03</accession>
<evidence type="ECO:0000255" key="1">
    <source>
        <dbReference type="HAMAP-Rule" id="MF_01092"/>
    </source>
</evidence>
<evidence type="ECO:0000305" key="2"/>
<name>ZAPD_COXBU</name>
<protein>
    <recommendedName>
        <fullName evidence="1">Cell division protein ZapD</fullName>
    </recommendedName>
    <alternativeName>
        <fullName evidence="1">Z ring-associated protein D</fullName>
    </alternativeName>
</protein>
<keyword id="KW-0131">Cell cycle</keyword>
<keyword id="KW-0132">Cell division</keyword>
<keyword id="KW-0963">Cytoplasm</keyword>
<keyword id="KW-1185">Reference proteome</keyword>
<keyword id="KW-0717">Septation</keyword>
<comment type="function">
    <text evidence="1">Cell division factor that enhances FtsZ-ring assembly. Directly interacts with FtsZ and promotes bundling of FtsZ protofilaments, with a reduction in FtsZ GTPase activity.</text>
</comment>
<comment type="subunit">
    <text evidence="1">Interacts with FtsZ.</text>
</comment>
<comment type="subcellular location">
    <subcellularLocation>
        <location evidence="1">Cytoplasm</location>
    </subcellularLocation>
    <text evidence="1">Localizes to mid-cell in an FtsZ-dependent manner.</text>
</comment>
<comment type="similarity">
    <text evidence="1">Belongs to the ZapD family.</text>
</comment>
<comment type="sequence caution" evidence="2">
    <conflict type="erroneous initiation">
        <sequence resource="EMBL-CDS" id="AAO89714"/>
    </conflict>
    <text>Extended N-terminus.</text>
</comment>
<gene>
    <name evidence="1" type="primary">zapD</name>
    <name type="ordered locus">CBU_0150</name>
</gene>
<reference key="1">
    <citation type="journal article" date="2003" name="Proc. Natl. Acad. Sci. U.S.A.">
        <title>Complete genome sequence of the Q-fever pathogen, Coxiella burnetii.</title>
        <authorList>
            <person name="Seshadri R."/>
            <person name="Paulsen I.T."/>
            <person name="Eisen J.A."/>
            <person name="Read T.D."/>
            <person name="Nelson K.E."/>
            <person name="Nelson W.C."/>
            <person name="Ward N.L."/>
            <person name="Tettelin H."/>
            <person name="Davidsen T.M."/>
            <person name="Beanan M.J."/>
            <person name="DeBoy R.T."/>
            <person name="Daugherty S.C."/>
            <person name="Brinkac L.M."/>
            <person name="Madupu R."/>
            <person name="Dodson R.J."/>
            <person name="Khouri H.M."/>
            <person name="Lee K.H."/>
            <person name="Carty H.A."/>
            <person name="Scanlan D."/>
            <person name="Heinzen R.A."/>
            <person name="Thompson H.A."/>
            <person name="Samuel J.E."/>
            <person name="Fraser C.M."/>
            <person name="Heidelberg J.F."/>
        </authorList>
    </citation>
    <scope>NUCLEOTIDE SEQUENCE [LARGE SCALE GENOMIC DNA]</scope>
    <source>
        <strain>RSA 493 / Nine Mile phase I</strain>
    </source>
</reference>